<protein>
    <recommendedName>
        <fullName>Elongator complex protein 6</fullName>
    </recommendedName>
    <alternativeName>
        <fullName>Protein TMEM103</fullName>
    </alternativeName>
</protein>
<organism>
    <name type="scientific">Xenopus tropicalis</name>
    <name type="common">Western clawed frog</name>
    <name type="synonym">Silurana tropicalis</name>
    <dbReference type="NCBI Taxonomy" id="8364"/>
    <lineage>
        <taxon>Eukaryota</taxon>
        <taxon>Metazoa</taxon>
        <taxon>Chordata</taxon>
        <taxon>Craniata</taxon>
        <taxon>Vertebrata</taxon>
        <taxon>Euteleostomi</taxon>
        <taxon>Amphibia</taxon>
        <taxon>Batrachia</taxon>
        <taxon>Anura</taxon>
        <taxon>Pipoidea</taxon>
        <taxon>Pipidae</taxon>
        <taxon>Xenopodinae</taxon>
        <taxon>Xenopus</taxon>
        <taxon>Silurana</taxon>
    </lineage>
</organism>
<proteinExistence type="evidence at transcript level"/>
<keyword id="KW-0963">Cytoplasm</keyword>
<keyword id="KW-0539">Nucleus</keyword>
<keyword id="KW-1185">Reference proteome</keyword>
<keyword id="KW-0819">tRNA processing</keyword>
<accession>Q28CX0</accession>
<accession>Q66KC5</accession>
<sequence>MFPELNSLLGAGTDTVERGKFTLLCDSKTDGSFLVHHFLSYYLRAGCRVCFVALVQSFSHYSIVAQKLGVNLSSAKDEGQLVFLEGLRSYTDLLFGDNPEAEVTNPLCFLRAGSDLKPLYSFVSAALAPSAGQSWKCPVLILDDVSVLLSLGVPPLQLLDFMHYCRATVCTQYQGNVVCLVHGAEESGDEEKELLRRSLSHQSQVILWAEGLSSGFCKEVHGQLKIFRGAVSSGKKRGQTQPEIYQYKIQDKHVTFFARGLSAAVL</sequence>
<evidence type="ECO:0000250" key="1">
    <source>
        <dbReference type="UniProtKB" id="Q0PNE2"/>
    </source>
</evidence>
<evidence type="ECO:0000305" key="2"/>
<name>ELP6_XENTR</name>
<dbReference type="EMBL" id="CR855827">
    <property type="protein sequence ID" value="CAJ83123.1"/>
    <property type="molecule type" value="mRNA"/>
</dbReference>
<dbReference type="EMBL" id="BC080461">
    <property type="protein sequence ID" value="AAH80461.1"/>
    <property type="molecule type" value="mRNA"/>
</dbReference>
<dbReference type="RefSeq" id="NP_001007953.2">
    <property type="nucleotide sequence ID" value="NM_001007952.2"/>
</dbReference>
<dbReference type="SMR" id="Q28CX0"/>
<dbReference type="FunCoup" id="Q28CX0">
    <property type="interactions" value="1710"/>
</dbReference>
<dbReference type="STRING" id="8364.ENSXETP00000043894"/>
<dbReference type="PaxDb" id="8364-ENSXETP00000030460"/>
<dbReference type="DNASU" id="493328"/>
<dbReference type="GeneID" id="493328"/>
<dbReference type="KEGG" id="xtr:493328"/>
<dbReference type="CTD" id="54859"/>
<dbReference type="eggNOG" id="KOG4723">
    <property type="taxonomic scope" value="Eukaryota"/>
</dbReference>
<dbReference type="InParanoid" id="Q28CX0"/>
<dbReference type="OrthoDB" id="9995306at2759"/>
<dbReference type="UniPathway" id="UPA00988"/>
<dbReference type="Proteomes" id="UP000008143">
    <property type="component" value="Chromosome 6"/>
</dbReference>
<dbReference type="GO" id="GO:0005737">
    <property type="term" value="C:cytoplasm"/>
    <property type="evidence" value="ECO:0007669"/>
    <property type="project" value="UniProtKB-SubCell"/>
</dbReference>
<dbReference type="GO" id="GO:0033588">
    <property type="term" value="C:elongator holoenzyme complex"/>
    <property type="evidence" value="ECO:0000250"/>
    <property type="project" value="UniProtKB"/>
</dbReference>
<dbReference type="GO" id="GO:0005634">
    <property type="term" value="C:nucleus"/>
    <property type="evidence" value="ECO:0007669"/>
    <property type="project" value="UniProtKB-SubCell"/>
</dbReference>
<dbReference type="GO" id="GO:0030335">
    <property type="term" value="P:positive regulation of cell migration"/>
    <property type="evidence" value="ECO:0000250"/>
    <property type="project" value="UniProtKB"/>
</dbReference>
<dbReference type="GO" id="GO:0002098">
    <property type="term" value="P:tRNA wobble uridine modification"/>
    <property type="evidence" value="ECO:0007669"/>
    <property type="project" value="InterPro"/>
</dbReference>
<dbReference type="CDD" id="cd19495">
    <property type="entry name" value="Elp6"/>
    <property type="match status" value="1"/>
</dbReference>
<dbReference type="FunFam" id="3.40.50.300:FF:001078">
    <property type="entry name" value="Elongator acetyltransferase complex subunit 6"/>
    <property type="match status" value="1"/>
</dbReference>
<dbReference type="Gene3D" id="3.40.50.300">
    <property type="entry name" value="P-loop containing nucleotide triphosphate hydrolases"/>
    <property type="match status" value="1"/>
</dbReference>
<dbReference type="InterPro" id="IPR018627">
    <property type="entry name" value="ELP6"/>
</dbReference>
<dbReference type="InterPro" id="IPR027417">
    <property type="entry name" value="P-loop_NTPase"/>
</dbReference>
<dbReference type="PANTHER" id="PTHR16184">
    <property type="entry name" value="ELONGATOR COMPLEX PROTEIN 6"/>
    <property type="match status" value="1"/>
</dbReference>
<dbReference type="PANTHER" id="PTHR16184:SF6">
    <property type="entry name" value="ELONGATOR COMPLEX PROTEIN 6"/>
    <property type="match status" value="1"/>
</dbReference>
<dbReference type="Pfam" id="PF09807">
    <property type="entry name" value="ELP6"/>
    <property type="match status" value="1"/>
</dbReference>
<gene>
    <name type="primary">elp6</name>
    <name type="synonym">tmem103</name>
    <name type="ORF">TTpA007a13.1</name>
</gene>
<reference key="1">
    <citation type="submission" date="2006-10" db="EMBL/GenBank/DDBJ databases">
        <authorList>
            <consortium name="Sanger Xenopus tropicalis EST/cDNA project"/>
        </authorList>
    </citation>
    <scope>NUCLEOTIDE SEQUENCE [LARGE SCALE MRNA]</scope>
    <source>
        <tissue>Tadpole</tissue>
    </source>
</reference>
<reference key="2">
    <citation type="submission" date="2004-08" db="EMBL/GenBank/DDBJ databases">
        <authorList>
            <consortium name="NIH - Xenopus Gene Collection (XGC) project"/>
        </authorList>
    </citation>
    <scope>NUCLEOTIDE SEQUENCE [LARGE SCALE MRNA]</scope>
    <source>
        <tissue>Embryo</tissue>
    </source>
</reference>
<feature type="chain" id="PRO_0000274364" description="Elongator complex protein 6">
    <location>
        <begin position="1"/>
        <end position="266"/>
    </location>
</feature>
<feature type="sequence conflict" description="In Ref. 1; CAJ83123." evidence="2" ref="1">
    <original>W</original>
    <variation>R</variation>
    <location>
        <position position="208"/>
    </location>
</feature>
<comment type="function">
    <text evidence="1">Component of the elongator complex which is required for multiple tRNA modifications, including mcm5U (5-methoxycarbonylmethyl uridine), mcm5s2U (5-methoxycarbonylmethyl-2-thiouridine), and ncm5U (5-carbamoylmethyl uridine) (By similarity). The elongator complex catalyzes formation of carboxymethyluridine in the wobble base at position 34 in tRNAs (By similarity).</text>
</comment>
<comment type="pathway">
    <text evidence="1">tRNA modification; 5-methoxycarbonylmethyl-2-thiouridine-tRNA biosynthesis.</text>
</comment>
<comment type="subunit">
    <text evidence="1">Component of the elongator complex.</text>
</comment>
<comment type="subcellular location">
    <subcellularLocation>
        <location evidence="1">Cytoplasm</location>
    </subcellularLocation>
    <subcellularLocation>
        <location evidence="1">Nucleus</location>
    </subcellularLocation>
    <text evidence="1">Concentrates in the nucleus upon insulin stimulation.</text>
</comment>
<comment type="similarity">
    <text evidence="2">Belongs to the ELP6 family.</text>
</comment>
<comment type="caution">
    <text evidence="1">The elongator complex was originally thought to play a role in transcription elongation. However, it is no longer thought to play a direct role in this process and its primary function is thought to be in tRNA modification.</text>
</comment>